<proteinExistence type="inferred from homology"/>
<name>CLPP_STRPG</name>
<protein>
    <recommendedName>
        <fullName evidence="1">ATP-dependent Clp protease proteolytic subunit</fullName>
        <ecNumber evidence="1">3.4.21.92</ecNumber>
    </recommendedName>
    <alternativeName>
        <fullName evidence="1">Endopeptidase Clp</fullName>
    </alternativeName>
</protein>
<reference key="1">
    <citation type="journal article" date="2007" name="J. Bacteriol.">
        <title>Complete genome of acute rheumatic fever-associated serotype M5 Streptococcus pyogenes strain Manfredo.</title>
        <authorList>
            <person name="Holden M.T.G."/>
            <person name="Scott A."/>
            <person name="Cherevach I."/>
            <person name="Chillingworth T."/>
            <person name="Churcher C."/>
            <person name="Cronin A."/>
            <person name="Dowd L."/>
            <person name="Feltwell T."/>
            <person name="Hamlin N."/>
            <person name="Holroyd S."/>
            <person name="Jagels K."/>
            <person name="Moule S."/>
            <person name="Mungall K."/>
            <person name="Quail M.A."/>
            <person name="Price C."/>
            <person name="Rabbinowitsch E."/>
            <person name="Sharp S."/>
            <person name="Skelton J."/>
            <person name="Whitehead S."/>
            <person name="Barrell B.G."/>
            <person name="Kehoe M."/>
            <person name="Parkhill J."/>
        </authorList>
    </citation>
    <scope>NUCLEOTIDE SEQUENCE [LARGE SCALE GENOMIC DNA]</scope>
    <source>
        <strain>Manfredo</strain>
    </source>
</reference>
<organism>
    <name type="scientific">Streptococcus pyogenes serotype M5 (strain Manfredo)</name>
    <dbReference type="NCBI Taxonomy" id="160491"/>
    <lineage>
        <taxon>Bacteria</taxon>
        <taxon>Bacillati</taxon>
        <taxon>Bacillota</taxon>
        <taxon>Bacilli</taxon>
        <taxon>Lactobacillales</taxon>
        <taxon>Streptococcaceae</taxon>
        <taxon>Streptococcus</taxon>
    </lineage>
</organism>
<sequence>MIPVVIEQTSRGERSYDIYSRLLKDRIIMLTGPVEDNMANSVIAQLLFLDAQDNTKDIYLYVNTPGGSVSAGLAIVDTMNFIKADVQTIVMGMAASMGTVIASSGTKGKRFMLPNAEYMIHQPMGGTGGGTQQTDMAIAAEHLLKTRHRLEKILAQNAGKTIKQIHKDAERDYWMSAEETLAYGFIDEIMENNELK</sequence>
<dbReference type="EC" id="3.4.21.92" evidence="1"/>
<dbReference type="EMBL" id="AM295007">
    <property type="protein sequence ID" value="CAM30851.1"/>
    <property type="molecule type" value="Genomic_DNA"/>
</dbReference>
<dbReference type="RefSeq" id="WP_002985850.1">
    <property type="nucleotide sequence ID" value="NC_009332.1"/>
</dbReference>
<dbReference type="SMR" id="A2RG72"/>
<dbReference type="MEROPS" id="S14.001"/>
<dbReference type="KEGG" id="spf:SpyM51530"/>
<dbReference type="HOGENOM" id="CLU_058707_3_2_9"/>
<dbReference type="GO" id="GO:0005737">
    <property type="term" value="C:cytoplasm"/>
    <property type="evidence" value="ECO:0007669"/>
    <property type="project" value="UniProtKB-SubCell"/>
</dbReference>
<dbReference type="GO" id="GO:0009368">
    <property type="term" value="C:endopeptidase Clp complex"/>
    <property type="evidence" value="ECO:0007669"/>
    <property type="project" value="TreeGrafter"/>
</dbReference>
<dbReference type="GO" id="GO:0004176">
    <property type="term" value="F:ATP-dependent peptidase activity"/>
    <property type="evidence" value="ECO:0007669"/>
    <property type="project" value="InterPro"/>
</dbReference>
<dbReference type="GO" id="GO:0051117">
    <property type="term" value="F:ATPase binding"/>
    <property type="evidence" value="ECO:0007669"/>
    <property type="project" value="TreeGrafter"/>
</dbReference>
<dbReference type="GO" id="GO:0004252">
    <property type="term" value="F:serine-type endopeptidase activity"/>
    <property type="evidence" value="ECO:0007669"/>
    <property type="project" value="UniProtKB-UniRule"/>
</dbReference>
<dbReference type="GO" id="GO:0006515">
    <property type="term" value="P:protein quality control for misfolded or incompletely synthesized proteins"/>
    <property type="evidence" value="ECO:0007669"/>
    <property type="project" value="TreeGrafter"/>
</dbReference>
<dbReference type="CDD" id="cd07017">
    <property type="entry name" value="S14_ClpP_2"/>
    <property type="match status" value="1"/>
</dbReference>
<dbReference type="FunFam" id="3.90.226.10:FF:000014">
    <property type="entry name" value="ATP-dependent Clp protease proteolytic subunit"/>
    <property type="match status" value="1"/>
</dbReference>
<dbReference type="Gene3D" id="3.90.226.10">
    <property type="entry name" value="2-enoyl-CoA Hydratase, Chain A, domain 1"/>
    <property type="match status" value="1"/>
</dbReference>
<dbReference type="HAMAP" id="MF_00444">
    <property type="entry name" value="ClpP"/>
    <property type="match status" value="1"/>
</dbReference>
<dbReference type="InterPro" id="IPR001907">
    <property type="entry name" value="ClpP"/>
</dbReference>
<dbReference type="InterPro" id="IPR029045">
    <property type="entry name" value="ClpP/crotonase-like_dom_sf"/>
</dbReference>
<dbReference type="InterPro" id="IPR023562">
    <property type="entry name" value="ClpP/TepA"/>
</dbReference>
<dbReference type="InterPro" id="IPR033135">
    <property type="entry name" value="ClpP_His_AS"/>
</dbReference>
<dbReference type="InterPro" id="IPR018215">
    <property type="entry name" value="ClpP_Ser_AS"/>
</dbReference>
<dbReference type="NCBIfam" id="NF001368">
    <property type="entry name" value="PRK00277.1"/>
    <property type="match status" value="1"/>
</dbReference>
<dbReference type="NCBIfam" id="NF009205">
    <property type="entry name" value="PRK12553.1"/>
    <property type="match status" value="1"/>
</dbReference>
<dbReference type="PANTHER" id="PTHR10381">
    <property type="entry name" value="ATP-DEPENDENT CLP PROTEASE PROTEOLYTIC SUBUNIT"/>
    <property type="match status" value="1"/>
</dbReference>
<dbReference type="PANTHER" id="PTHR10381:SF70">
    <property type="entry name" value="ATP-DEPENDENT CLP PROTEASE PROTEOLYTIC SUBUNIT"/>
    <property type="match status" value="1"/>
</dbReference>
<dbReference type="Pfam" id="PF00574">
    <property type="entry name" value="CLP_protease"/>
    <property type="match status" value="1"/>
</dbReference>
<dbReference type="PRINTS" id="PR00127">
    <property type="entry name" value="CLPPROTEASEP"/>
</dbReference>
<dbReference type="SUPFAM" id="SSF52096">
    <property type="entry name" value="ClpP/crotonase"/>
    <property type="match status" value="1"/>
</dbReference>
<dbReference type="PROSITE" id="PS00382">
    <property type="entry name" value="CLP_PROTEASE_HIS"/>
    <property type="match status" value="1"/>
</dbReference>
<dbReference type="PROSITE" id="PS00381">
    <property type="entry name" value="CLP_PROTEASE_SER"/>
    <property type="match status" value="1"/>
</dbReference>
<comment type="function">
    <text evidence="1">Cleaves peptides in various proteins in a process that requires ATP hydrolysis. Has a chymotrypsin-like activity. Plays a major role in the degradation of misfolded proteins.</text>
</comment>
<comment type="catalytic activity">
    <reaction evidence="1">
        <text>Hydrolysis of proteins to small peptides in the presence of ATP and magnesium. alpha-casein is the usual test substrate. In the absence of ATP, only oligopeptides shorter than five residues are hydrolyzed (such as succinyl-Leu-Tyr-|-NHMec, and Leu-Tyr-Leu-|-Tyr-Trp, in which cleavage of the -Tyr-|-Leu- and -Tyr-|-Trp bonds also occurs).</text>
        <dbReference type="EC" id="3.4.21.92"/>
    </reaction>
</comment>
<comment type="subunit">
    <text evidence="1">Fourteen ClpP subunits assemble into 2 heptameric rings which stack back to back to give a disk-like structure with a central cavity, resembling the structure of eukaryotic proteasomes.</text>
</comment>
<comment type="subcellular location">
    <subcellularLocation>
        <location evidence="1">Cytoplasm</location>
    </subcellularLocation>
</comment>
<comment type="similarity">
    <text evidence="1">Belongs to the peptidase S14 family.</text>
</comment>
<feature type="chain" id="PRO_1000026135" description="ATP-dependent Clp protease proteolytic subunit">
    <location>
        <begin position="1"/>
        <end position="196"/>
    </location>
</feature>
<feature type="active site" description="Nucleophile" evidence="1">
    <location>
        <position position="96"/>
    </location>
</feature>
<feature type="active site" evidence="1">
    <location>
        <position position="121"/>
    </location>
</feature>
<accession>A2RG72</accession>
<gene>
    <name evidence="1" type="primary">clpP</name>
    <name type="ordered locus">SpyM51530</name>
</gene>
<evidence type="ECO:0000255" key="1">
    <source>
        <dbReference type="HAMAP-Rule" id="MF_00444"/>
    </source>
</evidence>
<keyword id="KW-0963">Cytoplasm</keyword>
<keyword id="KW-0378">Hydrolase</keyword>
<keyword id="KW-0645">Protease</keyword>
<keyword id="KW-0720">Serine protease</keyword>